<name>SELD_TRIL1</name>
<evidence type="ECO:0000255" key="1">
    <source>
        <dbReference type="HAMAP-Rule" id="MF_00625"/>
    </source>
</evidence>
<sequence length="346" mass="36061">MTNKKIKLTQTVKAAGUAAKLGPEGLADALAGLNRPADPRLIVGPETSDDGGVYCLTPEIALIESCDVITPPADAPRAFGRIAAANALSDIYAMGGRPLTAMNLAFFPACSLQPEVLGEVLAGGQDALNEAGCCLVGGHTVEDDELKYGLSVTGTVHPEQVLRNSTARPGDCLLLTKPLGSGILSTAVKGEMATVEQEAEAVAWMSLLNRAAAELMLRYTPSACTDITGFGLIGHSCEMALGSGVTIRLYLDAVPLMQGVTDQVADGMVPAGCYRNRSYYLSRIDAGDCDPERLLPLFDPQTSGGLLIALQPGAAALFQAEAAENSIFCVLIGDVLPRAELPVIVV</sequence>
<proteinExistence type="inferred from homology"/>
<keyword id="KW-0067">ATP-binding</keyword>
<keyword id="KW-0418">Kinase</keyword>
<keyword id="KW-0460">Magnesium</keyword>
<keyword id="KW-0479">Metal-binding</keyword>
<keyword id="KW-0547">Nucleotide-binding</keyword>
<keyword id="KW-1185">Reference proteome</keyword>
<keyword id="KW-0711">Selenium</keyword>
<keyword id="KW-0712">Selenocysteine</keyword>
<keyword id="KW-0808">Transferase</keyword>
<feature type="chain" id="PRO_1000130520" description="Selenide, water dikinase">
    <location>
        <begin position="1"/>
        <end position="346"/>
    </location>
</feature>
<feature type="active site" evidence="1">
    <location>
        <position position="17"/>
    </location>
</feature>
<feature type="binding site" description="in other chain" evidence="1">
    <location>
        <position position="20"/>
    </location>
    <ligand>
        <name>ATP</name>
        <dbReference type="ChEBI" id="CHEBI:30616"/>
        <note>ligand shared between dimeric partners</note>
    </ligand>
</feature>
<feature type="binding site" description="in other chain" evidence="1">
    <location>
        <begin position="47"/>
        <end position="49"/>
    </location>
    <ligand>
        <name>ATP</name>
        <dbReference type="ChEBI" id="CHEBI:30616"/>
        <note>ligand shared between dimeric partners</note>
    </ligand>
</feature>
<feature type="binding site" evidence="1">
    <location>
        <position position="50"/>
    </location>
    <ligand>
        <name>Mg(2+)</name>
        <dbReference type="ChEBI" id="CHEBI:18420"/>
    </ligand>
</feature>
<feature type="binding site" description="in other chain" evidence="1">
    <location>
        <position position="67"/>
    </location>
    <ligand>
        <name>ATP</name>
        <dbReference type="ChEBI" id="CHEBI:30616"/>
        <note>ligand shared between dimeric partners</note>
    </ligand>
</feature>
<feature type="binding site" description="in other chain" evidence="1">
    <location>
        <position position="90"/>
    </location>
    <ligand>
        <name>ATP</name>
        <dbReference type="ChEBI" id="CHEBI:30616"/>
        <note>ligand shared between dimeric partners</note>
    </ligand>
</feature>
<feature type="binding site" evidence="1">
    <location>
        <position position="90"/>
    </location>
    <ligand>
        <name>Mg(2+)</name>
        <dbReference type="ChEBI" id="CHEBI:18420"/>
    </ligand>
</feature>
<feature type="binding site" evidence="1">
    <location>
        <begin position="138"/>
        <end position="140"/>
    </location>
    <ligand>
        <name>ATP</name>
        <dbReference type="ChEBI" id="CHEBI:30616"/>
        <note>ligand shared between dimeric partners</note>
    </ligand>
</feature>
<feature type="binding site" evidence="1">
    <location>
        <position position="226"/>
    </location>
    <ligand>
        <name>Mg(2+)</name>
        <dbReference type="ChEBI" id="CHEBI:18420"/>
    </ligand>
</feature>
<feature type="site" description="Important for catalytic activity" evidence="1">
    <location>
        <position position="20"/>
    </location>
</feature>
<feature type="non-standard amino acid" description="Selenocysteine">
    <location>
        <position position="17"/>
    </location>
</feature>
<reference key="1">
    <citation type="submission" date="2008-05" db="EMBL/GenBank/DDBJ databases">
        <title>Complete sequence of chromosome of Geobacter lovleyi SZ.</title>
        <authorList>
            <consortium name="US DOE Joint Genome Institute"/>
            <person name="Lucas S."/>
            <person name="Copeland A."/>
            <person name="Lapidus A."/>
            <person name="Glavina del Rio T."/>
            <person name="Dalin E."/>
            <person name="Tice H."/>
            <person name="Bruce D."/>
            <person name="Goodwin L."/>
            <person name="Pitluck S."/>
            <person name="Chertkov O."/>
            <person name="Meincke L."/>
            <person name="Brettin T."/>
            <person name="Detter J.C."/>
            <person name="Han C."/>
            <person name="Tapia R."/>
            <person name="Kuske C.R."/>
            <person name="Schmutz J."/>
            <person name="Larimer F."/>
            <person name="Land M."/>
            <person name="Hauser L."/>
            <person name="Kyrpides N."/>
            <person name="Mikhailova N."/>
            <person name="Sung Y."/>
            <person name="Fletcher K.E."/>
            <person name="Ritalahti K.M."/>
            <person name="Loeffler F.E."/>
            <person name="Richardson P."/>
        </authorList>
    </citation>
    <scope>NUCLEOTIDE SEQUENCE [LARGE SCALE GENOMIC DNA]</scope>
    <source>
        <strain>ATCC BAA-1151 / DSM 17278 / SZ</strain>
    </source>
</reference>
<accession>B3E7F7</accession>
<protein>
    <recommendedName>
        <fullName evidence="1">Selenide, water dikinase</fullName>
        <ecNumber evidence="1">2.7.9.3</ecNumber>
    </recommendedName>
    <alternativeName>
        <fullName evidence="1">Selenium donor protein</fullName>
    </alternativeName>
    <alternativeName>
        <fullName evidence="1">Selenophosphate synthase</fullName>
    </alternativeName>
</protein>
<gene>
    <name evidence="1" type="primary">selD</name>
    <name type="ordered locus">Glov_2761</name>
</gene>
<organism>
    <name type="scientific">Trichlorobacter lovleyi (strain ATCC BAA-1151 / DSM 17278 / SZ)</name>
    <name type="common">Geobacter lovleyi</name>
    <dbReference type="NCBI Taxonomy" id="398767"/>
    <lineage>
        <taxon>Bacteria</taxon>
        <taxon>Pseudomonadati</taxon>
        <taxon>Thermodesulfobacteriota</taxon>
        <taxon>Desulfuromonadia</taxon>
        <taxon>Geobacterales</taxon>
        <taxon>Geobacteraceae</taxon>
        <taxon>Trichlorobacter</taxon>
    </lineage>
</organism>
<comment type="function">
    <text evidence="1">Synthesizes selenophosphate from selenide and ATP.</text>
</comment>
<comment type="catalytic activity">
    <reaction evidence="1">
        <text>hydrogenselenide + ATP + H2O = selenophosphate + AMP + phosphate + 2 H(+)</text>
        <dbReference type="Rhea" id="RHEA:18737"/>
        <dbReference type="ChEBI" id="CHEBI:15377"/>
        <dbReference type="ChEBI" id="CHEBI:15378"/>
        <dbReference type="ChEBI" id="CHEBI:16144"/>
        <dbReference type="ChEBI" id="CHEBI:29317"/>
        <dbReference type="ChEBI" id="CHEBI:30616"/>
        <dbReference type="ChEBI" id="CHEBI:43474"/>
        <dbReference type="ChEBI" id="CHEBI:456215"/>
        <dbReference type="EC" id="2.7.9.3"/>
    </reaction>
</comment>
<comment type="cofactor">
    <cofactor evidence="1">
        <name>Mg(2+)</name>
        <dbReference type="ChEBI" id="CHEBI:18420"/>
    </cofactor>
    <text evidence="1">Binds 1 Mg(2+) ion per monomer.</text>
</comment>
<comment type="subunit">
    <text evidence="1">Homodimer.</text>
</comment>
<comment type="similarity">
    <text evidence="1">Belongs to the selenophosphate synthase 1 family. Class I subfamily.</text>
</comment>
<dbReference type="EC" id="2.7.9.3" evidence="1"/>
<dbReference type="EMBL" id="CP001089">
    <property type="protein sequence ID" value="ACD96474.1"/>
    <property type="molecule type" value="Genomic_DNA"/>
</dbReference>
<dbReference type="RefSeq" id="WP_012470803.1">
    <property type="nucleotide sequence ID" value="NC_010814.1"/>
</dbReference>
<dbReference type="STRING" id="398767.Glov_2761"/>
<dbReference type="KEGG" id="glo:Glov_2761"/>
<dbReference type="eggNOG" id="COG0709">
    <property type="taxonomic scope" value="Bacteria"/>
</dbReference>
<dbReference type="HOGENOM" id="CLU_032859_0_1_7"/>
<dbReference type="OrthoDB" id="9767928at2"/>
<dbReference type="Proteomes" id="UP000002420">
    <property type="component" value="Chromosome"/>
</dbReference>
<dbReference type="GO" id="GO:0005737">
    <property type="term" value="C:cytoplasm"/>
    <property type="evidence" value="ECO:0007669"/>
    <property type="project" value="TreeGrafter"/>
</dbReference>
<dbReference type="GO" id="GO:0005524">
    <property type="term" value="F:ATP binding"/>
    <property type="evidence" value="ECO:0007669"/>
    <property type="project" value="UniProtKB-UniRule"/>
</dbReference>
<dbReference type="GO" id="GO:0000287">
    <property type="term" value="F:magnesium ion binding"/>
    <property type="evidence" value="ECO:0007669"/>
    <property type="project" value="UniProtKB-UniRule"/>
</dbReference>
<dbReference type="GO" id="GO:0004756">
    <property type="term" value="F:selenide, water dikinase activity"/>
    <property type="evidence" value="ECO:0007669"/>
    <property type="project" value="UniProtKB-UniRule"/>
</dbReference>
<dbReference type="GO" id="GO:0016260">
    <property type="term" value="P:selenocysteine biosynthetic process"/>
    <property type="evidence" value="ECO:0007669"/>
    <property type="project" value="InterPro"/>
</dbReference>
<dbReference type="CDD" id="cd02195">
    <property type="entry name" value="SelD"/>
    <property type="match status" value="1"/>
</dbReference>
<dbReference type="FunFam" id="3.30.1330.10:FF:000003">
    <property type="entry name" value="Selenide, water dikinase"/>
    <property type="match status" value="1"/>
</dbReference>
<dbReference type="FunFam" id="3.90.650.10:FF:000004">
    <property type="entry name" value="Selenide, water dikinase"/>
    <property type="match status" value="1"/>
</dbReference>
<dbReference type="Gene3D" id="3.90.650.10">
    <property type="entry name" value="PurM-like C-terminal domain"/>
    <property type="match status" value="1"/>
</dbReference>
<dbReference type="Gene3D" id="3.30.1330.10">
    <property type="entry name" value="PurM-like, N-terminal domain"/>
    <property type="match status" value="1"/>
</dbReference>
<dbReference type="HAMAP" id="MF_00625">
    <property type="entry name" value="SelD"/>
    <property type="match status" value="1"/>
</dbReference>
<dbReference type="InterPro" id="IPR010918">
    <property type="entry name" value="PurM-like_C_dom"/>
</dbReference>
<dbReference type="InterPro" id="IPR036676">
    <property type="entry name" value="PurM-like_C_sf"/>
</dbReference>
<dbReference type="InterPro" id="IPR016188">
    <property type="entry name" value="PurM-like_N"/>
</dbReference>
<dbReference type="InterPro" id="IPR036921">
    <property type="entry name" value="PurM-like_N_sf"/>
</dbReference>
<dbReference type="InterPro" id="IPR023061">
    <property type="entry name" value="SelD_I"/>
</dbReference>
<dbReference type="InterPro" id="IPR004536">
    <property type="entry name" value="SPS/SelD"/>
</dbReference>
<dbReference type="NCBIfam" id="NF002098">
    <property type="entry name" value="PRK00943.1"/>
    <property type="match status" value="1"/>
</dbReference>
<dbReference type="NCBIfam" id="TIGR00476">
    <property type="entry name" value="selD"/>
    <property type="match status" value="1"/>
</dbReference>
<dbReference type="PANTHER" id="PTHR10256:SF0">
    <property type="entry name" value="INACTIVE SELENIDE, WATER DIKINASE-LIKE PROTEIN-RELATED"/>
    <property type="match status" value="1"/>
</dbReference>
<dbReference type="PANTHER" id="PTHR10256">
    <property type="entry name" value="SELENIDE, WATER DIKINASE"/>
    <property type="match status" value="1"/>
</dbReference>
<dbReference type="Pfam" id="PF00586">
    <property type="entry name" value="AIRS"/>
    <property type="match status" value="1"/>
</dbReference>
<dbReference type="Pfam" id="PF02769">
    <property type="entry name" value="AIRS_C"/>
    <property type="match status" value="1"/>
</dbReference>
<dbReference type="PIRSF" id="PIRSF036407">
    <property type="entry name" value="Selenphspht_syn"/>
    <property type="match status" value="1"/>
</dbReference>
<dbReference type="SUPFAM" id="SSF56042">
    <property type="entry name" value="PurM C-terminal domain-like"/>
    <property type="match status" value="1"/>
</dbReference>
<dbReference type="SUPFAM" id="SSF55326">
    <property type="entry name" value="PurM N-terminal domain-like"/>
    <property type="match status" value="1"/>
</dbReference>